<comment type="function">
    <text evidence="2 3 4 6 7 8 9 10 11 12 13 14">Involved in the import of GDP-mannose from the cytoplasm into the Golgi lumen. Defective copy causes severe glycosylation defect and abnormal retention of soluble endoplasmic reticulum proteins. Involved in vanadate sensitivity.</text>
</comment>
<comment type="subunit">
    <text evidence="2 3">Homooligomer.</text>
</comment>
<comment type="subcellular location">
    <subcellularLocation>
        <location>Golgi apparatus membrane</location>
        <topology>Multi-pass membrane protein</topology>
    </subcellularLocation>
    <subcellularLocation>
        <location>Cytoplasmic vesicle membrane</location>
        <topology>Multi-pass membrane protein</topology>
    </subcellularLocation>
    <subcellularLocation>
        <location>Endoplasmic reticulum membrane</location>
        <topology>Multi-pass membrane protein</topology>
    </subcellularLocation>
    <text>Recycles between the Golgi apparatus and the endoplasmic reticulum.</text>
</comment>
<comment type="miscellaneous">
    <text evidence="5">Present with 31900 molecules/cell in log phase SD medium.</text>
</comment>
<comment type="similarity">
    <text evidence="15">Belongs to the TPT transporter family. SLC35D subfamily.</text>
</comment>
<protein>
    <recommendedName>
        <fullName>GDP-mannose transporter 1</fullName>
        <shortName>GMT 1</shortName>
    </recommendedName>
    <alternativeName>
        <fullName>Low dye-binding protein 3</fullName>
    </alternativeName>
    <alternativeName>
        <fullName>Morphogenesis checkpoint-dependent protein 3</fullName>
    </alternativeName>
    <alternativeName>
        <fullName>Vanadate resistance glycosylation protein 4</fullName>
    </alternativeName>
</protein>
<evidence type="ECO:0000255" key="1"/>
<evidence type="ECO:0000269" key="2">
    <source>
    </source>
</evidence>
<evidence type="ECO:0000269" key="3">
    <source>
    </source>
</evidence>
<evidence type="ECO:0000269" key="4">
    <source>
    </source>
</evidence>
<evidence type="ECO:0000269" key="5">
    <source>
    </source>
</evidence>
<evidence type="ECO:0000269" key="6">
    <source>
    </source>
</evidence>
<evidence type="ECO:0000269" key="7">
    <source>
    </source>
</evidence>
<evidence type="ECO:0000269" key="8">
    <source>
    </source>
</evidence>
<evidence type="ECO:0000269" key="9">
    <source>
    </source>
</evidence>
<evidence type="ECO:0000269" key="10">
    <source>
    </source>
</evidence>
<evidence type="ECO:0000269" key="11">
    <source>
    </source>
</evidence>
<evidence type="ECO:0000269" key="12">
    <source>
    </source>
</evidence>
<evidence type="ECO:0000269" key="13">
    <source>
    </source>
</evidence>
<evidence type="ECO:0000269" key="14">
    <source>
    </source>
</evidence>
<evidence type="ECO:0000305" key="15"/>
<evidence type="ECO:0007829" key="16">
    <source>
        <dbReference type="PDB" id="5OGE"/>
    </source>
</evidence>
<feature type="chain" id="PRO_0000213398" description="GDP-mannose transporter 1">
    <location>
        <begin position="1"/>
        <end position="337"/>
    </location>
</feature>
<feature type="topological domain" description="Cytoplasmic" evidence="1">
    <location>
        <begin position="1"/>
        <end position="16"/>
    </location>
</feature>
<feature type="transmembrane region" description="Helical" evidence="1">
    <location>
        <begin position="17"/>
        <end position="37"/>
    </location>
</feature>
<feature type="topological domain" description="Lumenal" evidence="1">
    <location>
        <begin position="38"/>
        <end position="51"/>
    </location>
</feature>
<feature type="transmembrane region" description="Helical" evidence="1">
    <location>
        <begin position="52"/>
        <end position="72"/>
    </location>
</feature>
<feature type="topological domain" description="Cytoplasmic" evidence="1">
    <location>
        <begin position="73"/>
        <end position="92"/>
    </location>
</feature>
<feature type="transmembrane region" description="Helical" evidence="1">
    <location>
        <begin position="93"/>
        <end position="113"/>
    </location>
</feature>
<feature type="topological domain" description="Lumenal" evidence="1">
    <location>
        <begin position="114"/>
        <end position="119"/>
    </location>
</feature>
<feature type="transmembrane region" description="Helical" evidence="1">
    <location>
        <begin position="120"/>
        <end position="140"/>
    </location>
</feature>
<feature type="topological domain" description="Cytoplasmic" evidence="1">
    <location>
        <begin position="141"/>
        <end position="144"/>
    </location>
</feature>
<feature type="transmembrane region" description="Helical" evidence="1">
    <location>
        <begin position="145"/>
        <end position="165"/>
    </location>
</feature>
<feature type="topological domain" description="Lumenal" evidence="1">
    <location>
        <begin position="166"/>
        <end position="180"/>
    </location>
</feature>
<feature type="transmembrane region" description="Helical" evidence="1">
    <location>
        <begin position="181"/>
        <end position="201"/>
    </location>
</feature>
<feature type="topological domain" description="Cytoplasmic" evidence="1">
    <location>
        <begin position="202"/>
        <end position="215"/>
    </location>
</feature>
<feature type="transmembrane region" description="Helical" evidence="1">
    <location>
        <begin position="216"/>
        <end position="236"/>
    </location>
</feature>
<feature type="topological domain" description="Lumenal" evidence="1">
    <location>
        <begin position="237"/>
        <end position="252"/>
    </location>
</feature>
<feature type="transmembrane region" description="Helical" evidence="1">
    <location>
        <begin position="253"/>
        <end position="273"/>
    </location>
</feature>
<feature type="topological domain" description="Cytoplasmic" evidence="1">
    <location>
        <begin position="274"/>
        <end position="279"/>
    </location>
</feature>
<feature type="transmembrane region" description="Helical" evidence="1">
    <location>
        <begin position="280"/>
        <end position="300"/>
    </location>
</feature>
<feature type="topological domain" description="Lumenal" evidence="1">
    <location>
        <begin position="301"/>
        <end position="304"/>
    </location>
</feature>
<feature type="transmembrane region" description="Helical" evidence="1">
    <location>
        <begin position="305"/>
        <end position="325"/>
    </location>
</feature>
<feature type="topological domain" description="Cytoplasmic" evidence="1">
    <location>
        <begin position="326"/>
        <end position="337"/>
    </location>
</feature>
<feature type="region of interest" description="RET2-binding">
    <location>
        <begin position="326"/>
        <end position="337"/>
    </location>
</feature>
<feature type="binding site">
    <location>
        <begin position="279"/>
        <end position="291"/>
    </location>
    <ligand>
        <name>GDP-alpha-D-mannose</name>
        <dbReference type="ChEBI" id="CHEBI:57527"/>
    </ligand>
</feature>
<feature type="glycosylation site" description="N-linked (GlcNAc...) asparagine" evidence="1">
    <location>
        <position position="119"/>
    </location>
</feature>
<feature type="glycosylation site" description="N-linked (GlcNAc...) asparagine" evidence="1">
    <location>
        <position position="242"/>
    </location>
</feature>
<feature type="glycosylation site" description="N-linked (GlcNAc...) asparagine" evidence="1">
    <location>
        <position position="246"/>
    </location>
</feature>
<feature type="glycosylation site" description="N-linked (GlcNAc...) asparagine" evidence="1">
    <location>
        <position position="249"/>
    </location>
</feature>
<feature type="mutagenesis site" description="In VIG4-2; increases drug sensitivity and decreases protein glycolysis." evidence="2">
    <original>S</original>
    <variation>C</variation>
    <location>
        <position position="278"/>
    </location>
</feature>
<feature type="mutagenesis site" description="Decreases transport activity and GDP-mannose-binding." evidence="3">
    <original>T</original>
    <variation>A</variation>
    <location>
        <position position="280"/>
    </location>
</feature>
<feature type="mutagenesis site" description="Decreases transport activity and GDP-mannose-binding." evidence="3">
    <original>S</original>
    <variation>A</variation>
    <location>
        <position position="282"/>
    </location>
</feature>
<feature type="mutagenesis site" description="Decreases transport activity and GDP-mannose-binding." evidence="3">
    <original>G</original>
    <variation>A</variation>
    <variation>D</variation>
    <location>
        <position position="285"/>
    </location>
</feature>
<feature type="mutagenesis site" description="In VIG4-1; increases drug sensitivity and decreases protein glycolysis." evidence="2 3">
    <original>A</original>
    <variation>V</variation>
    <location>
        <position position="286"/>
    </location>
</feature>
<feature type="mutagenesis site" description="Decreases transport activity and GDP-mannose-binding." evidence="3">
    <original>L</original>
    <variation>A</variation>
    <location>
        <position position="287"/>
    </location>
</feature>
<feature type="mutagenesis site" description="Decreases transport activity and GDP-mannose-binding." evidence="3">
    <original>N</original>
    <variation>A</variation>
    <location>
        <position position="288"/>
    </location>
</feature>
<feature type="mutagenesis site" description="Decreases transport activity and GDP-mannose-binding." evidence="3">
    <original>K</original>
    <variation>A</variation>
    <variation>D</variation>
    <location>
        <position position="289"/>
    </location>
</feature>
<feature type="mutagenesis site" description="Decreases transport activity and GDP-mannose-binding." evidence="3">
    <original>P</original>
    <variation>A</variation>
    <location>
        <position position="291"/>
    </location>
</feature>
<feature type="strand" evidence="16">
    <location>
        <begin position="18"/>
        <end position="20"/>
    </location>
</feature>
<feature type="helix" evidence="16">
    <location>
        <begin position="23"/>
        <end position="41"/>
    </location>
</feature>
<feature type="helix" evidence="16">
    <location>
        <begin position="51"/>
        <end position="70"/>
    </location>
</feature>
<feature type="helix" evidence="16">
    <location>
        <begin position="83"/>
        <end position="108"/>
    </location>
</feature>
<feature type="helix" evidence="16">
    <location>
        <begin position="111"/>
        <end position="132"/>
    </location>
</feature>
<feature type="helix" evidence="16">
    <location>
        <begin position="139"/>
        <end position="157"/>
    </location>
</feature>
<feature type="helix" evidence="16">
    <location>
        <begin position="178"/>
        <end position="208"/>
    </location>
</feature>
<feature type="helix" evidence="16">
    <location>
        <begin position="215"/>
        <end position="222"/>
    </location>
</feature>
<feature type="helix" evidence="16">
    <location>
        <begin position="224"/>
        <end position="235"/>
    </location>
</feature>
<feature type="helix" evidence="16">
    <location>
        <begin position="240"/>
        <end position="244"/>
    </location>
</feature>
<feature type="helix" evidence="16">
    <location>
        <begin position="249"/>
        <end position="275"/>
    </location>
</feature>
<feature type="helix" evidence="16">
    <location>
        <begin position="278"/>
        <end position="287"/>
    </location>
</feature>
<feature type="helix" evidence="16">
    <location>
        <begin position="289"/>
        <end position="299"/>
    </location>
</feature>
<feature type="helix" evidence="16">
    <location>
        <begin position="306"/>
        <end position="332"/>
    </location>
</feature>
<gene>
    <name type="primary">VRG4</name>
    <name type="synonym">GOG5</name>
    <name type="synonym">LDB3</name>
    <name type="synonym">MCD3</name>
    <name type="synonym">VAN2</name>
    <name type="synonym">VIG4</name>
    <name type="ordered locus">YGL225W</name>
</gene>
<accession>P40107</accession>
<accession>D6VVB0</accession>
<sequence>MSELKTGHAGHNPWASVANSGPISILSYCGSSILMTVTNKFVVNLKDFNMNFVMLFVQSLVCTITLIILRILGYAKFRSLNKTDAKNWFPISFLLVLMIYTSSKALQYLAVPIYTIFKNLTIILIAYGEVLFFGGSVTSMELSSFLLMVLSSVVATWGDQQAVAAKAASLAEGAAGAVASFNPGYFWMFTNCITSALFVLIMRKRIKLTNFKDFDTMFYNNVLALPILLLFSFCVEDWSSVNLTNNFSNDSLTAMIISGVASVGISYCSGWCVRVTSSTTYSMVGALNKLPIALSGLIFFDAPRNFLSILSIFIGFLSGIIYAVAKQKKQQAQPLRK</sequence>
<proteinExistence type="evidence at protein level"/>
<reference key="1">
    <citation type="journal article" date="1996" name="J. Biol. Chem.">
        <title>The yeast VRG4 gene is required for normal Golgi functions and defines a new family of related genes.</title>
        <authorList>
            <person name="Poster J.B."/>
            <person name="Dean N."/>
        </authorList>
    </citation>
    <scope>NUCLEOTIDE SEQUENCE [GENOMIC DNA]</scope>
    <scope>FUNCTION</scope>
    <source>
        <strain>ATCC 204508 / S288c</strain>
    </source>
</reference>
<reference key="2">
    <citation type="journal article" date="1995" name="Genetics">
        <title>Sodium orthovanadate-resistant mutants of Saccharomyces cerevisiae show defects in Golgi-mediated protein glycosylation, sporulation and detergent resistance.</title>
        <authorList>
            <person name="Kanik-Ennulat C."/>
            <person name="Montalvo E."/>
            <person name="Neff N."/>
        </authorList>
    </citation>
    <scope>NUCLEOTIDE SEQUENCE [GENOMIC DNA]</scope>
    <scope>FUNCTION</scope>
    <source>
        <strain>ATCC 204508 / S288c</strain>
    </source>
</reference>
<reference key="3">
    <citation type="journal article" date="1997" name="Yeast">
        <title>Sequence analysis of 203 kilobases from Saccharomyces cerevisiae chromosome VII.</title>
        <authorList>
            <person name="Rieger M."/>
            <person name="Brueckner M."/>
            <person name="Schaefer M."/>
            <person name="Mueller-Auer S."/>
        </authorList>
    </citation>
    <scope>NUCLEOTIDE SEQUENCE [GENOMIC DNA]</scope>
    <source>
        <strain>ATCC 204508 / S288c</strain>
    </source>
</reference>
<reference key="4">
    <citation type="journal article" date="1997" name="Nature">
        <title>The nucleotide sequence of Saccharomyces cerevisiae chromosome VII.</title>
        <authorList>
            <person name="Tettelin H."/>
            <person name="Agostoni-Carbone M.L."/>
            <person name="Albermann K."/>
            <person name="Albers M."/>
            <person name="Arroyo J."/>
            <person name="Backes U."/>
            <person name="Barreiros T."/>
            <person name="Bertani I."/>
            <person name="Bjourson A.J."/>
            <person name="Brueckner M."/>
            <person name="Bruschi C.V."/>
            <person name="Carignani G."/>
            <person name="Castagnoli L."/>
            <person name="Cerdan E."/>
            <person name="Clemente M.L."/>
            <person name="Coblenz A."/>
            <person name="Coglievina M."/>
            <person name="Coissac E."/>
            <person name="Defoor E."/>
            <person name="Del Bino S."/>
            <person name="Delius H."/>
            <person name="Delneri D."/>
            <person name="de Wergifosse P."/>
            <person name="Dujon B."/>
            <person name="Durand P."/>
            <person name="Entian K.-D."/>
            <person name="Eraso P."/>
            <person name="Escribano V."/>
            <person name="Fabiani L."/>
            <person name="Fartmann B."/>
            <person name="Feroli F."/>
            <person name="Feuermann M."/>
            <person name="Frontali L."/>
            <person name="Garcia-Gonzalez M."/>
            <person name="Garcia-Saez M.I."/>
            <person name="Goffeau A."/>
            <person name="Guerreiro P."/>
            <person name="Hani J."/>
            <person name="Hansen M."/>
            <person name="Hebling U."/>
            <person name="Hernandez K."/>
            <person name="Heumann K."/>
            <person name="Hilger F."/>
            <person name="Hofmann B."/>
            <person name="Indge K.J."/>
            <person name="James C.M."/>
            <person name="Klima R."/>
            <person name="Koetter P."/>
            <person name="Kramer B."/>
            <person name="Kramer W."/>
            <person name="Lauquin G."/>
            <person name="Leuther H."/>
            <person name="Louis E.J."/>
            <person name="Maillier E."/>
            <person name="Marconi A."/>
            <person name="Martegani E."/>
            <person name="Mazon M.J."/>
            <person name="Mazzoni C."/>
            <person name="McReynolds A.D.K."/>
            <person name="Melchioretto P."/>
            <person name="Mewes H.-W."/>
            <person name="Minenkova O."/>
            <person name="Mueller-Auer S."/>
            <person name="Nawrocki A."/>
            <person name="Netter P."/>
            <person name="Neu R."/>
            <person name="Nombela C."/>
            <person name="Oliver S.G."/>
            <person name="Panzeri L."/>
            <person name="Paoluzi S."/>
            <person name="Plevani P."/>
            <person name="Portetelle D."/>
            <person name="Portillo F."/>
            <person name="Potier S."/>
            <person name="Purnelle B."/>
            <person name="Rieger M."/>
            <person name="Riles L."/>
            <person name="Rinaldi T."/>
            <person name="Robben J."/>
            <person name="Rodrigues-Pousada C."/>
            <person name="Rodriguez-Belmonte E."/>
            <person name="Rodriguez-Torres A.M."/>
            <person name="Rose M."/>
            <person name="Ruzzi M."/>
            <person name="Saliola M."/>
            <person name="Sanchez-Perez M."/>
            <person name="Schaefer B."/>
            <person name="Schaefer M."/>
            <person name="Scharfe M."/>
            <person name="Schmidheini T."/>
            <person name="Schreer A."/>
            <person name="Skala J."/>
            <person name="Souciet J.-L."/>
            <person name="Steensma H.Y."/>
            <person name="Talla E."/>
            <person name="Thierry A."/>
            <person name="Vandenbol M."/>
            <person name="van der Aart Q.J.M."/>
            <person name="Van Dyck L."/>
            <person name="Vanoni M."/>
            <person name="Verhasselt P."/>
            <person name="Voet M."/>
            <person name="Volckaert G."/>
            <person name="Wambutt R."/>
            <person name="Watson M.D."/>
            <person name="Weber N."/>
            <person name="Wedler E."/>
            <person name="Wedler H."/>
            <person name="Wipfli P."/>
            <person name="Wolf K."/>
            <person name="Wright L.F."/>
            <person name="Zaccaria P."/>
            <person name="Zimmermann M."/>
            <person name="Zollner A."/>
            <person name="Kleine K."/>
        </authorList>
    </citation>
    <scope>NUCLEOTIDE SEQUENCE [LARGE SCALE GENOMIC DNA]</scope>
    <source>
        <strain>ATCC 204508 / S288c</strain>
    </source>
</reference>
<reference key="5">
    <citation type="journal article" date="2014" name="G3 (Bethesda)">
        <title>The reference genome sequence of Saccharomyces cerevisiae: Then and now.</title>
        <authorList>
            <person name="Engel S.R."/>
            <person name="Dietrich F.S."/>
            <person name="Fisk D.G."/>
            <person name="Binkley G."/>
            <person name="Balakrishnan R."/>
            <person name="Costanzo M.C."/>
            <person name="Dwight S.S."/>
            <person name="Hitz B.C."/>
            <person name="Karra K."/>
            <person name="Nash R.S."/>
            <person name="Weng S."/>
            <person name="Wong E.D."/>
            <person name="Lloyd P."/>
            <person name="Skrzypek M.S."/>
            <person name="Miyasato S.R."/>
            <person name="Simison M."/>
            <person name="Cherry J.M."/>
        </authorList>
    </citation>
    <scope>GENOME REANNOTATION</scope>
    <source>
        <strain>ATCC 204508 / S288c</strain>
    </source>
</reference>
<reference key="6">
    <citation type="journal article" date="1990" name="Mol. Cell. Biol.">
        <title>Vanadate-resistant mutants of Saccharomyces cerevisiae show alterations in protein phosphorylation and growth control.</title>
        <authorList>
            <person name="Kanik-Ennulat C."/>
            <person name="Neff N."/>
        </authorList>
    </citation>
    <scope>FUNCTION</scope>
</reference>
<reference key="7">
    <citation type="journal article" date="1991" name="Proc. Natl. Acad. Sci. U.S.A.">
        <title>Vanadate-resistant yeast mutants are defective in protein glycosylation.</title>
        <authorList>
            <person name="Ballou L."/>
            <person name="Hitzeman R.A."/>
            <person name="Lewis M.S."/>
            <person name="Ballou C.E."/>
        </authorList>
    </citation>
    <scope>FUNCTION</scope>
</reference>
<reference key="8">
    <citation type="journal article" date="1995" name="Proc. Natl. Acad. Sci. U.S.A.">
        <title>Yeast glycosylation mutants are sensitive to aminoglycosides.</title>
        <authorList>
            <person name="Dean N."/>
        </authorList>
    </citation>
    <scope>FUNCTION</scope>
</reference>
<reference key="9">
    <citation type="journal article" date="1997" name="Genetics">
        <title>Identification of genes controlling growth polarity in the budding yeast Saccharomyces cerevisiae: a possible role of N-glycosylation and involvement of the exocyst complex.</title>
        <authorList>
            <person name="Mondesert G."/>
            <person name="Clarke D.J."/>
            <person name="Reed S.I."/>
        </authorList>
    </citation>
    <scope>FUNCTION</scope>
</reference>
<reference key="10">
    <citation type="journal article" date="1997" name="Glycobiology">
        <title>Isolation of new nonconditional Saccharomyces cerevisiae mutants defective in asparagine-linked glycosylation.</title>
        <authorList>
            <person name="Manas P."/>
            <person name="Olivero I."/>
            <person name="Avalos M."/>
            <person name="Hernandez L.M."/>
        </authorList>
    </citation>
    <scope>FUNCTION</scope>
</reference>
<reference key="11">
    <citation type="journal article" date="1997" name="J. Biol. Chem.">
        <title>The VRG4 gene is required for GDP-mannose transport into the lumen of the Golgi in the yeast, Saccharomyces cerevisiae.</title>
        <authorList>
            <person name="Dean N."/>
            <person name="Zhang Y.B."/>
            <person name="Poster J.B."/>
        </authorList>
    </citation>
    <scope>FUNCTION</scope>
    <scope>SUBCELLULAR LOCATION</scope>
</reference>
<reference key="12">
    <citation type="journal article" date="1999" name="FEBS Lett.">
        <title>Molecular characterization of Vig4/Vrg4 GDP-mannose transporter of the yeast Saccharomyces cerevisiae.</title>
        <authorList>
            <person name="Abe M."/>
            <person name="Hashimoto H."/>
            <person name="Yoda K."/>
        </authorList>
    </citation>
    <scope>FUNCTION</scope>
    <scope>SUBCELLULAR LOCATION</scope>
    <scope>SUBUNIT</scope>
    <scope>MUTAGENESIS OF SER-278 AND ALA-286</scope>
</reference>
<reference key="13">
    <citation type="journal article" date="2001" name="J. Biol. Chem.">
        <title>Identification of a conserved motif in the yeast Golgi GDP-mannose transporter required for binding to nucleotide sugar.</title>
        <authorList>
            <person name="Gao X.-D."/>
            <person name="Nishikawa A."/>
            <person name="Dean N."/>
        </authorList>
    </citation>
    <scope>FUNCTION</scope>
    <scope>SUBCELLULAR LOCATION</scope>
    <scope>SUBUNIT</scope>
    <scope>DOMAIN</scope>
    <scope>MUTAGENESIS OF THR-280; SER-282; GLY-285; ALA-286; LEU-287; ASN-288; LYS-289 AND PRO-291</scope>
</reference>
<reference key="14">
    <citation type="journal article" date="2002" name="Yeast">
        <title>Progression of the stacked Golgi compartments in the yeast Saccharomyces cerevisiae by overproduction of GDP-mannose transporter.</title>
        <authorList>
            <person name="Hashimoto H."/>
            <person name="Abe M."/>
            <person name="Hirata A."/>
            <person name="Noda Y."/>
            <person name="Adachi H."/>
            <person name="Yoda K."/>
        </authorList>
    </citation>
    <scope>FUNCTION</scope>
    <scope>SUBCELLULAR LOCATION</scope>
</reference>
<reference key="15">
    <citation type="journal article" date="2003" name="Nature">
        <title>Global analysis of protein localization in budding yeast.</title>
        <authorList>
            <person name="Huh W.-K."/>
            <person name="Falvo J.V."/>
            <person name="Gerke L.C."/>
            <person name="Carroll A.S."/>
            <person name="Howson R.W."/>
            <person name="Weissman J.S."/>
            <person name="O'Shea E.K."/>
        </authorList>
    </citation>
    <scope>SUBCELLULAR LOCATION [LARGE SCALE ANALYSIS]</scope>
</reference>
<reference key="16">
    <citation type="journal article" date="2003" name="Nature">
        <title>Global analysis of protein expression in yeast.</title>
        <authorList>
            <person name="Ghaemmaghami S."/>
            <person name="Huh W.-K."/>
            <person name="Bower K."/>
            <person name="Howson R.W."/>
            <person name="Belle A."/>
            <person name="Dephoure N."/>
            <person name="O'Shea E.K."/>
            <person name="Weissman J.S."/>
        </authorList>
    </citation>
    <scope>LEVEL OF PROTEIN EXPRESSION [LARGE SCALE ANALYSIS]</scope>
</reference>
<reference key="17">
    <citation type="journal article" date="2004" name="J. Cell Sci.">
        <title>Localization of GDP-mannose transporter in the Golgi requires retrieval to the endoplasmic reticulum depending on its cytoplasmic tail and coatomer.</title>
        <authorList>
            <person name="Abe M."/>
            <person name="Noda Y."/>
            <person name="Adachi H."/>
            <person name="Yoda K."/>
        </authorList>
    </citation>
    <scope>FUNCTION</scope>
    <scope>SUBCELLULAR LOCATION</scope>
    <scope>DOMAIN</scope>
    <scope>INTERACTION WITH RET2</scope>
</reference>
<reference key="18">
    <citation type="journal article" date="2006" name="Nature">
        <title>Golgi maturation visualized in living yeast.</title>
        <authorList>
            <person name="Losev E."/>
            <person name="Reinke C.A."/>
            <person name="Jellen J."/>
            <person name="Strongin D.E."/>
            <person name="Bevis B.J."/>
            <person name="Glick B.S."/>
        </authorList>
    </citation>
    <scope>SUBCELLULAR LOCATION</scope>
</reference>
<reference key="19">
    <citation type="journal article" date="2006" name="Proc. Natl. Acad. Sci. U.S.A.">
        <title>A global topology map of the Saccharomyces cerevisiae membrane proteome.</title>
        <authorList>
            <person name="Kim H."/>
            <person name="Melen K."/>
            <person name="Oesterberg M."/>
            <person name="von Heijne G."/>
        </authorList>
    </citation>
    <scope>TOPOLOGY [LARGE SCALE ANALYSIS]</scope>
    <source>
        <strain>ATCC 208353 / W303-1A</strain>
    </source>
</reference>
<keyword id="KW-0002">3D-structure</keyword>
<keyword id="KW-0968">Cytoplasmic vesicle</keyword>
<keyword id="KW-0256">Endoplasmic reticulum</keyword>
<keyword id="KW-0325">Glycoprotein</keyword>
<keyword id="KW-0333">Golgi apparatus</keyword>
<keyword id="KW-0472">Membrane</keyword>
<keyword id="KW-1185">Reference proteome</keyword>
<keyword id="KW-0762">Sugar transport</keyword>
<keyword id="KW-0812">Transmembrane</keyword>
<keyword id="KW-1133">Transmembrane helix</keyword>
<keyword id="KW-0813">Transport</keyword>
<name>GMT1_YEAST</name>
<dbReference type="EMBL" id="L33915">
    <property type="protein sequence ID" value="AAC37468.1"/>
    <property type="molecule type" value="Genomic_DNA"/>
</dbReference>
<dbReference type="EMBL" id="U15599">
    <property type="protein sequence ID" value="AAA81537.1"/>
    <property type="molecule type" value="Genomic_DNA"/>
</dbReference>
<dbReference type="EMBL" id="Z72747">
    <property type="protein sequence ID" value="CAA96941.1"/>
    <property type="molecule type" value="Genomic_DNA"/>
</dbReference>
<dbReference type="EMBL" id="BK006941">
    <property type="protein sequence ID" value="DAA07894.1"/>
    <property type="molecule type" value="Genomic_DNA"/>
</dbReference>
<dbReference type="PIR" id="S50238">
    <property type="entry name" value="S50238"/>
</dbReference>
<dbReference type="RefSeq" id="NP_011290.1">
    <property type="nucleotide sequence ID" value="NM_001181090.1"/>
</dbReference>
<dbReference type="PDB" id="5OGE">
    <property type="method" value="X-ray"/>
    <property type="resolution" value="3.22 A"/>
    <property type="chains" value="A/B/C/D/E/F/G/H=1-337"/>
</dbReference>
<dbReference type="PDB" id="5OGK">
    <property type="method" value="X-ray"/>
    <property type="resolution" value="3.60 A"/>
    <property type="chains" value="A/B/C/D/E/F/G/H=1-337"/>
</dbReference>
<dbReference type="PDB" id="6QSK">
    <property type="method" value="X-ray"/>
    <property type="resolution" value="3.39 A"/>
    <property type="chains" value="A/B/C/D/E/F/G/H=1-337"/>
</dbReference>
<dbReference type="PDBsum" id="5OGE"/>
<dbReference type="PDBsum" id="5OGK"/>
<dbReference type="PDBsum" id="6QSK"/>
<dbReference type="SMR" id="P40107"/>
<dbReference type="BioGRID" id="33034">
    <property type="interactions" value="151"/>
</dbReference>
<dbReference type="DIP" id="DIP-5108N"/>
<dbReference type="FunCoup" id="P40107">
    <property type="interactions" value="654"/>
</dbReference>
<dbReference type="IntAct" id="P40107">
    <property type="interactions" value="28"/>
</dbReference>
<dbReference type="STRING" id="4932.YGL225W"/>
<dbReference type="TCDB" id="2.A.7.13.1">
    <property type="family name" value="the drug/metabolite transporter (dmt) superfamily"/>
</dbReference>
<dbReference type="GlyCosmos" id="P40107">
    <property type="glycosylation" value="4 sites, No reported glycans"/>
</dbReference>
<dbReference type="GlyGen" id="P40107">
    <property type="glycosylation" value="4 sites"/>
</dbReference>
<dbReference type="PaxDb" id="4932-YGL225W"/>
<dbReference type="PeptideAtlas" id="P40107"/>
<dbReference type="EnsemblFungi" id="YGL225W_mRNA">
    <property type="protein sequence ID" value="YGL225W"/>
    <property type="gene ID" value="YGL225W"/>
</dbReference>
<dbReference type="GeneID" id="852647"/>
<dbReference type="KEGG" id="sce:YGL225W"/>
<dbReference type="AGR" id="SGD:S000003193"/>
<dbReference type="SGD" id="S000003193">
    <property type="gene designation" value="VRG4"/>
</dbReference>
<dbReference type="VEuPathDB" id="FungiDB:YGL225W"/>
<dbReference type="eggNOG" id="KOG1444">
    <property type="taxonomic scope" value="Eukaryota"/>
</dbReference>
<dbReference type="GeneTree" id="ENSGT00510000048348"/>
<dbReference type="HOGENOM" id="CLU_025360_1_2_1"/>
<dbReference type="InParanoid" id="P40107"/>
<dbReference type="OMA" id="VWMLINC"/>
<dbReference type="OrthoDB" id="417037at2759"/>
<dbReference type="BioCyc" id="YEAST:G3O-30699-MONOMER"/>
<dbReference type="BioGRID-ORCS" id="852647">
    <property type="hits" value="0 hits in 10 CRISPR screens"/>
</dbReference>
<dbReference type="PRO" id="PR:P40107"/>
<dbReference type="Proteomes" id="UP000002311">
    <property type="component" value="Chromosome VII"/>
</dbReference>
<dbReference type="RNAct" id="P40107">
    <property type="molecule type" value="protein"/>
</dbReference>
<dbReference type="GO" id="GO:0030659">
    <property type="term" value="C:cytoplasmic vesicle membrane"/>
    <property type="evidence" value="ECO:0007669"/>
    <property type="project" value="UniProtKB-SubCell"/>
</dbReference>
<dbReference type="GO" id="GO:0005789">
    <property type="term" value="C:endoplasmic reticulum membrane"/>
    <property type="evidence" value="ECO:0007669"/>
    <property type="project" value="UniProtKB-SubCell"/>
</dbReference>
<dbReference type="GO" id="GO:0005794">
    <property type="term" value="C:Golgi apparatus"/>
    <property type="evidence" value="ECO:0000314"/>
    <property type="project" value="SGD"/>
</dbReference>
<dbReference type="GO" id="GO:0000139">
    <property type="term" value="C:Golgi membrane"/>
    <property type="evidence" value="ECO:0007669"/>
    <property type="project" value="UniProtKB-SubCell"/>
</dbReference>
<dbReference type="GO" id="GO:0005739">
    <property type="term" value="C:mitochondrion"/>
    <property type="evidence" value="ECO:0007005"/>
    <property type="project" value="SGD"/>
</dbReference>
<dbReference type="GO" id="GO:0015297">
    <property type="term" value="F:antiporter activity"/>
    <property type="evidence" value="ECO:0000318"/>
    <property type="project" value="GO_Central"/>
</dbReference>
<dbReference type="GO" id="GO:0005458">
    <property type="term" value="F:GDP-mannose transmembrane transporter activity"/>
    <property type="evidence" value="ECO:0000314"/>
    <property type="project" value="SGD"/>
</dbReference>
<dbReference type="GO" id="GO:1990570">
    <property type="term" value="P:GDP-mannose transmembrane transport"/>
    <property type="evidence" value="ECO:0000315"/>
    <property type="project" value="SGD"/>
</dbReference>
<dbReference type="InterPro" id="IPR013657">
    <property type="entry name" value="SCL35B1-4/HUT1"/>
</dbReference>
<dbReference type="InterPro" id="IPR050186">
    <property type="entry name" value="TPT_transporter"/>
</dbReference>
<dbReference type="NCBIfam" id="TIGR00803">
    <property type="entry name" value="nst"/>
    <property type="match status" value="1"/>
</dbReference>
<dbReference type="PANTHER" id="PTHR11132">
    <property type="entry name" value="SOLUTE CARRIER FAMILY 35"/>
    <property type="match status" value="1"/>
</dbReference>
<dbReference type="Pfam" id="PF08449">
    <property type="entry name" value="UAA"/>
    <property type="match status" value="1"/>
</dbReference>
<dbReference type="SUPFAM" id="SSF103481">
    <property type="entry name" value="Multidrug resistance efflux transporter EmrE"/>
    <property type="match status" value="1"/>
</dbReference>
<organism>
    <name type="scientific">Saccharomyces cerevisiae (strain ATCC 204508 / S288c)</name>
    <name type="common">Baker's yeast</name>
    <dbReference type="NCBI Taxonomy" id="559292"/>
    <lineage>
        <taxon>Eukaryota</taxon>
        <taxon>Fungi</taxon>
        <taxon>Dikarya</taxon>
        <taxon>Ascomycota</taxon>
        <taxon>Saccharomycotina</taxon>
        <taxon>Saccharomycetes</taxon>
        <taxon>Saccharomycetales</taxon>
        <taxon>Saccharomycetaceae</taxon>
        <taxon>Saccharomyces</taxon>
    </lineage>
</organism>